<sequence>MKVLLSALLLLLFAFEPSASGKKLSDPVLSKRMELYHKIEAVTQIPWYALAAVDQYEENVRSNRKDLPEKAGIISIYIPDDIWSGPENPNPKDDAPLSIKVFDGIGMDGDGDGKAEVSNDEDILYTFSQYLLSYGTDEDNIRIGLWNYYRRDQTVGIISEFMKLFKAYGHIDLGEHAFPLPIRTDYSYRSTWGDARGFGGRRIHEGTDIFAHYGLPVKSTCYGVVEMKGWNRFGGWRIGIRDINNTYHYFAHLNGFAKGIKTGQIVEPGQVIGSVGSSGYGPPGTAGKFPPHLHYGMYKDNGRTEWSFDPYPHLRAWERYEYQKKK</sequence>
<reference key="1">
    <citation type="journal article" date="1997" name="Nature">
        <title>The complete genome sequence of the Gram-positive bacterium Bacillus subtilis.</title>
        <authorList>
            <person name="Kunst F."/>
            <person name="Ogasawara N."/>
            <person name="Moszer I."/>
            <person name="Albertini A.M."/>
            <person name="Alloni G."/>
            <person name="Azevedo V."/>
            <person name="Bertero M.G."/>
            <person name="Bessieres P."/>
            <person name="Bolotin A."/>
            <person name="Borchert S."/>
            <person name="Borriss R."/>
            <person name="Boursier L."/>
            <person name="Brans A."/>
            <person name="Braun M."/>
            <person name="Brignell S.C."/>
            <person name="Bron S."/>
            <person name="Brouillet S."/>
            <person name="Bruschi C.V."/>
            <person name="Caldwell B."/>
            <person name="Capuano V."/>
            <person name="Carter N.M."/>
            <person name="Choi S.-K."/>
            <person name="Codani J.-J."/>
            <person name="Connerton I.F."/>
            <person name="Cummings N.J."/>
            <person name="Daniel R.A."/>
            <person name="Denizot F."/>
            <person name="Devine K.M."/>
            <person name="Duesterhoeft A."/>
            <person name="Ehrlich S.D."/>
            <person name="Emmerson P.T."/>
            <person name="Entian K.-D."/>
            <person name="Errington J."/>
            <person name="Fabret C."/>
            <person name="Ferrari E."/>
            <person name="Foulger D."/>
            <person name="Fritz C."/>
            <person name="Fujita M."/>
            <person name="Fujita Y."/>
            <person name="Fuma S."/>
            <person name="Galizzi A."/>
            <person name="Galleron N."/>
            <person name="Ghim S.-Y."/>
            <person name="Glaser P."/>
            <person name="Goffeau A."/>
            <person name="Golightly E.J."/>
            <person name="Grandi G."/>
            <person name="Guiseppi G."/>
            <person name="Guy B.J."/>
            <person name="Haga K."/>
            <person name="Haiech J."/>
            <person name="Harwood C.R."/>
            <person name="Henaut A."/>
            <person name="Hilbert H."/>
            <person name="Holsappel S."/>
            <person name="Hosono S."/>
            <person name="Hullo M.-F."/>
            <person name="Itaya M."/>
            <person name="Jones L.-M."/>
            <person name="Joris B."/>
            <person name="Karamata D."/>
            <person name="Kasahara Y."/>
            <person name="Klaerr-Blanchard M."/>
            <person name="Klein C."/>
            <person name="Kobayashi Y."/>
            <person name="Koetter P."/>
            <person name="Koningstein G."/>
            <person name="Krogh S."/>
            <person name="Kumano M."/>
            <person name="Kurita K."/>
            <person name="Lapidus A."/>
            <person name="Lardinois S."/>
            <person name="Lauber J."/>
            <person name="Lazarevic V."/>
            <person name="Lee S.-M."/>
            <person name="Levine A."/>
            <person name="Liu H."/>
            <person name="Masuda S."/>
            <person name="Mauel C."/>
            <person name="Medigue C."/>
            <person name="Medina N."/>
            <person name="Mellado R.P."/>
            <person name="Mizuno M."/>
            <person name="Moestl D."/>
            <person name="Nakai S."/>
            <person name="Noback M."/>
            <person name="Noone D."/>
            <person name="O'Reilly M."/>
            <person name="Ogawa K."/>
            <person name="Ogiwara A."/>
            <person name="Oudega B."/>
            <person name="Park S.-H."/>
            <person name="Parro V."/>
            <person name="Pohl T.M."/>
            <person name="Portetelle D."/>
            <person name="Porwollik S."/>
            <person name="Prescott A.M."/>
            <person name="Presecan E."/>
            <person name="Pujic P."/>
            <person name="Purnelle B."/>
            <person name="Rapoport G."/>
            <person name="Rey M."/>
            <person name="Reynolds S."/>
            <person name="Rieger M."/>
            <person name="Rivolta C."/>
            <person name="Rocha E."/>
            <person name="Roche B."/>
            <person name="Rose M."/>
            <person name="Sadaie Y."/>
            <person name="Sato T."/>
            <person name="Scanlan E."/>
            <person name="Schleich S."/>
            <person name="Schroeter R."/>
            <person name="Scoffone F."/>
            <person name="Sekiguchi J."/>
            <person name="Sekowska A."/>
            <person name="Seror S.J."/>
            <person name="Serror P."/>
            <person name="Shin B.-S."/>
            <person name="Soldo B."/>
            <person name="Sorokin A."/>
            <person name="Tacconi E."/>
            <person name="Takagi T."/>
            <person name="Takahashi H."/>
            <person name="Takemaru K."/>
            <person name="Takeuchi M."/>
            <person name="Tamakoshi A."/>
            <person name="Tanaka T."/>
            <person name="Terpstra P."/>
            <person name="Tognoni A."/>
            <person name="Tosato V."/>
            <person name="Uchiyama S."/>
            <person name="Vandenbol M."/>
            <person name="Vannier F."/>
            <person name="Vassarotti A."/>
            <person name="Viari A."/>
            <person name="Wambutt R."/>
            <person name="Wedler E."/>
            <person name="Wedler H."/>
            <person name="Weitzenegger T."/>
            <person name="Winters P."/>
            <person name="Wipat A."/>
            <person name="Yamamoto H."/>
            <person name="Yamane K."/>
            <person name="Yasumoto K."/>
            <person name="Yata K."/>
            <person name="Yoshida K."/>
            <person name="Yoshikawa H.-F."/>
            <person name="Zumstein E."/>
            <person name="Yoshikawa H."/>
            <person name="Danchin A."/>
        </authorList>
    </citation>
    <scope>NUCLEOTIDE SEQUENCE [LARGE SCALE GENOMIC DNA]</scope>
    <source>
        <strain>168</strain>
    </source>
</reference>
<reference key="2">
    <citation type="journal article" date="2003" name="J. Bacteriol.">
        <title>Characterization of LytH, a differentiation-associated peptidoglycan hydrolase of Bacillus subtilis involved in endospore cortex maturation.</title>
        <authorList>
            <person name="Horsburgh G.J."/>
            <person name="Atrih A."/>
            <person name="Foster S.J."/>
        </authorList>
    </citation>
    <scope>FUNCTION</scope>
    <scope>TRANSCRIPTIONAL REGULATION</scope>
    <source>
        <strain>168</strain>
    </source>
</reference>
<dbReference type="EC" id="3.4.-.-"/>
<dbReference type="EMBL" id="AL009126">
    <property type="protein sequence ID" value="CAB15224.2"/>
    <property type="molecule type" value="Genomic_DNA"/>
</dbReference>
<dbReference type="PIR" id="D70015">
    <property type="entry name" value="D70015"/>
</dbReference>
<dbReference type="RefSeq" id="NP_391114.2">
    <property type="nucleotide sequence ID" value="NC_000964.3"/>
</dbReference>
<dbReference type="RefSeq" id="WP_003243462.1">
    <property type="nucleotide sequence ID" value="NZ_OZ025638.1"/>
</dbReference>
<dbReference type="SMR" id="O32130"/>
<dbReference type="FunCoup" id="O32130">
    <property type="interactions" value="35"/>
</dbReference>
<dbReference type="STRING" id="224308.BSU32340"/>
<dbReference type="MEROPS" id="M23.010"/>
<dbReference type="PaxDb" id="224308-BSU32340"/>
<dbReference type="EnsemblBacteria" id="CAB15224">
    <property type="protein sequence ID" value="CAB15224"/>
    <property type="gene ID" value="BSU_32340"/>
</dbReference>
<dbReference type="GeneID" id="936510"/>
<dbReference type="KEGG" id="bsu:BSU32340"/>
<dbReference type="PATRIC" id="fig|224308.179.peg.3501"/>
<dbReference type="eggNOG" id="COG0739">
    <property type="taxonomic scope" value="Bacteria"/>
</dbReference>
<dbReference type="InParanoid" id="O32130"/>
<dbReference type="OrthoDB" id="9810477at2"/>
<dbReference type="BioCyc" id="BSUB:BSU32340-MONOMER"/>
<dbReference type="Proteomes" id="UP000001570">
    <property type="component" value="Chromosome"/>
</dbReference>
<dbReference type="GO" id="GO:0046872">
    <property type="term" value="F:metal ion binding"/>
    <property type="evidence" value="ECO:0007669"/>
    <property type="project" value="UniProtKB-KW"/>
</dbReference>
<dbReference type="GO" id="GO:0004222">
    <property type="term" value="F:metalloendopeptidase activity"/>
    <property type="evidence" value="ECO:0000318"/>
    <property type="project" value="GO_Central"/>
</dbReference>
<dbReference type="GO" id="GO:0030154">
    <property type="term" value="P:cell differentiation"/>
    <property type="evidence" value="ECO:0007669"/>
    <property type="project" value="UniProtKB-KW"/>
</dbReference>
<dbReference type="GO" id="GO:0071555">
    <property type="term" value="P:cell wall organization"/>
    <property type="evidence" value="ECO:0007669"/>
    <property type="project" value="UniProtKB-KW"/>
</dbReference>
<dbReference type="GO" id="GO:0006508">
    <property type="term" value="P:proteolysis"/>
    <property type="evidence" value="ECO:0007669"/>
    <property type="project" value="UniProtKB-KW"/>
</dbReference>
<dbReference type="GO" id="GO:0030435">
    <property type="term" value="P:sporulation resulting in formation of a cellular spore"/>
    <property type="evidence" value="ECO:0007669"/>
    <property type="project" value="UniProtKB-KW"/>
</dbReference>
<dbReference type="CDD" id="cd12797">
    <property type="entry name" value="M23_peptidase"/>
    <property type="match status" value="1"/>
</dbReference>
<dbReference type="Gene3D" id="2.70.70.10">
    <property type="entry name" value="Glucose Permease (Domain IIA)"/>
    <property type="match status" value="1"/>
</dbReference>
<dbReference type="InterPro" id="IPR050570">
    <property type="entry name" value="Cell_wall_metabolism_enzyme"/>
</dbReference>
<dbReference type="InterPro" id="IPR011055">
    <property type="entry name" value="Dup_hybrid_motif"/>
</dbReference>
<dbReference type="InterPro" id="IPR016047">
    <property type="entry name" value="Peptidase_M23"/>
</dbReference>
<dbReference type="PANTHER" id="PTHR21666:SF289">
    <property type="entry name" value="L-ALA--D-GLU ENDOPEPTIDASE"/>
    <property type="match status" value="1"/>
</dbReference>
<dbReference type="PANTHER" id="PTHR21666">
    <property type="entry name" value="PEPTIDASE-RELATED"/>
    <property type="match status" value="1"/>
</dbReference>
<dbReference type="Pfam" id="PF01551">
    <property type="entry name" value="Peptidase_M23"/>
    <property type="match status" value="1"/>
</dbReference>
<dbReference type="SUPFAM" id="SSF51261">
    <property type="entry name" value="Duplicated hybrid motif"/>
    <property type="match status" value="1"/>
</dbReference>
<protein>
    <recommendedName>
        <fullName>L-Ala--D-Glu endopeptidase</fullName>
        <ecNumber>3.4.-.-</ecNumber>
    </recommendedName>
    <alternativeName>
        <fullName>Peptidoglycan hydrolase</fullName>
    </alternativeName>
    <alternativeName>
        <fullName>Sporulation-specific endopeptidase</fullName>
    </alternativeName>
</protein>
<comment type="function">
    <text evidence="3">L-Ala--D-Glu endopeptidase involved in production of single L-alanine side chains from tetrapeptides in the spore cortex peptidoglycan. Therefore, is required for the endospore cortex maturation.</text>
</comment>
<comment type="cofactor">
    <cofactor evidence="1">
        <name>Zn(2+)</name>
        <dbReference type="ChEBI" id="CHEBI:29105"/>
    </cofactor>
    <text evidence="1">Binds 1 zinc ion per subunit.</text>
</comment>
<comment type="developmental stage">
    <text>Expressed only during sporulation.</text>
</comment>
<comment type="induction">
    <text evidence="3">Expressed under the control of the late mother cell-specific sigma factor sigma-K.</text>
</comment>
<comment type="miscellaneous">
    <text>The presence of single L-alanine residues in the spore cortex increases the spores ability to be resistant to heat.</text>
</comment>
<comment type="similarity">
    <text evidence="4">Belongs to the peptidase M23B family.</text>
</comment>
<keyword id="KW-0131">Cell cycle</keyword>
<keyword id="KW-0961">Cell wall biogenesis/degradation</keyword>
<keyword id="KW-0221">Differentiation</keyword>
<keyword id="KW-0378">Hydrolase</keyword>
<keyword id="KW-0479">Metal-binding</keyword>
<keyword id="KW-0482">Metalloprotease</keyword>
<keyword id="KW-0645">Protease</keyword>
<keyword id="KW-1185">Reference proteome</keyword>
<keyword id="KW-0732">Signal</keyword>
<keyword id="KW-0749">Sporulation</keyword>
<keyword id="KW-0862">Zinc</keyword>
<accession>O32130</accession>
<feature type="signal peptide" evidence="2">
    <location>
        <begin position="1"/>
        <end position="19"/>
    </location>
</feature>
<feature type="chain" id="PRO_0000165904" description="L-Ala--D-Glu endopeptidase">
    <location>
        <begin position="20"/>
        <end position="326"/>
    </location>
</feature>
<feature type="binding site" evidence="1">
    <location>
        <position position="204"/>
    </location>
    <ligand>
        <name>Zn(2+)</name>
        <dbReference type="ChEBI" id="CHEBI:29105"/>
    </ligand>
</feature>
<feature type="binding site" evidence="1">
    <location>
        <position position="208"/>
    </location>
    <ligand>
        <name>Zn(2+)</name>
        <dbReference type="ChEBI" id="CHEBI:29105"/>
    </ligand>
</feature>
<feature type="binding site" evidence="1">
    <location>
        <position position="292"/>
    </location>
    <ligand>
        <name>Zn(2+)</name>
        <dbReference type="ChEBI" id="CHEBI:29105"/>
    </ligand>
</feature>
<feature type="binding site" evidence="1">
    <location>
        <position position="294"/>
    </location>
    <ligand>
        <name>Zn(2+)</name>
        <dbReference type="ChEBI" id="CHEBI:29105"/>
    </ligand>
</feature>
<name>LYTH_BACSU</name>
<proteinExistence type="evidence at transcript level"/>
<gene>
    <name type="primary">lytH</name>
    <name type="synonym">yunA</name>
    <name type="synonym">yutA</name>
    <name type="ordered locus">BSU32340</name>
</gene>
<organism>
    <name type="scientific">Bacillus subtilis (strain 168)</name>
    <dbReference type="NCBI Taxonomy" id="224308"/>
    <lineage>
        <taxon>Bacteria</taxon>
        <taxon>Bacillati</taxon>
        <taxon>Bacillota</taxon>
        <taxon>Bacilli</taxon>
        <taxon>Bacillales</taxon>
        <taxon>Bacillaceae</taxon>
        <taxon>Bacillus</taxon>
    </lineage>
</organism>
<evidence type="ECO:0000250" key="1"/>
<evidence type="ECO:0000255" key="2"/>
<evidence type="ECO:0000269" key="3">
    <source>
    </source>
</evidence>
<evidence type="ECO:0000305" key="4"/>